<proteinExistence type="inferred from homology"/>
<comment type="catalytic activity">
    <reaction evidence="1">
        <text>2-(N(omega)-L-arginino)succinate = fumarate + L-arginine</text>
        <dbReference type="Rhea" id="RHEA:24020"/>
        <dbReference type="ChEBI" id="CHEBI:29806"/>
        <dbReference type="ChEBI" id="CHEBI:32682"/>
        <dbReference type="ChEBI" id="CHEBI:57472"/>
        <dbReference type="EC" id="4.3.2.1"/>
    </reaction>
</comment>
<comment type="pathway">
    <text evidence="1">Amino-acid biosynthesis; L-arginine biosynthesis; L-arginine from L-ornithine and carbamoyl phosphate: step 3/3.</text>
</comment>
<comment type="subcellular location">
    <subcellularLocation>
        <location evidence="1">Cytoplasm</location>
    </subcellularLocation>
</comment>
<comment type="similarity">
    <text evidence="1">Belongs to the lyase 1 family. Argininosuccinate lyase subfamily.</text>
</comment>
<sequence length="469" mass="51173">MTSQLHKKGEAWSARFSEPMSELVKRYTSSVFFDKRLALVDIAGSLAHAGMLAAQKIISADDLAAIERGMAQIKGEIERGEFEWQLDLEDVHLNIEARLTALIGDAGKRLHTGRSRNDQVATDIRLWLRGEIDRIGGLLNDLRGALIDLAEQNADTILPGFTHLQVAQPVTFGHHLLAYVEMFSRDAERMRDCRARVNRLPLGAAALAGTSYPIDRHAVAKTLGFDGICANSLDAVSDRDFAIEFTAAAALVMTHVSRFSEELVLWMSPRVGFIDIADRFCTGSSIMPQKKNPDVPELARGKTGRVNGHLMALLTLMKGQPLAYNKDNQEDKEPLFDTVDTVADTLRIFAEMVAGITVKPDAMRAAALQGFSTATDLADYLVKRGLPFRDAHEAVAHAVKVCDARGIDLADLTLDEMKQELPNVAHLIGEDVFDYLTLEGSVASRNHPGGTAPDQVRAAAKAARAALGQ</sequence>
<feature type="chain" id="PRO_1000000458" description="Argininosuccinate lyase">
    <location>
        <begin position="1"/>
        <end position="469"/>
    </location>
</feature>
<name>ARLY_BURM7</name>
<organism>
    <name type="scientific">Burkholderia mallei (strain NCTC 10247)</name>
    <dbReference type="NCBI Taxonomy" id="320389"/>
    <lineage>
        <taxon>Bacteria</taxon>
        <taxon>Pseudomonadati</taxon>
        <taxon>Pseudomonadota</taxon>
        <taxon>Betaproteobacteria</taxon>
        <taxon>Burkholderiales</taxon>
        <taxon>Burkholderiaceae</taxon>
        <taxon>Burkholderia</taxon>
        <taxon>pseudomallei group</taxon>
    </lineage>
</organism>
<gene>
    <name evidence="1" type="primary">argH</name>
    <name type="ordered locus">BMA10247_1608</name>
</gene>
<keyword id="KW-0028">Amino-acid biosynthesis</keyword>
<keyword id="KW-0055">Arginine biosynthesis</keyword>
<keyword id="KW-0963">Cytoplasm</keyword>
<keyword id="KW-0456">Lyase</keyword>
<protein>
    <recommendedName>
        <fullName evidence="1">Argininosuccinate lyase</fullName>
        <shortName evidence="1">ASAL</shortName>
        <ecNumber evidence="1">4.3.2.1</ecNumber>
    </recommendedName>
    <alternativeName>
        <fullName evidence="1">Arginosuccinase</fullName>
    </alternativeName>
</protein>
<reference key="1">
    <citation type="journal article" date="2010" name="Genome Biol. Evol.">
        <title>Continuing evolution of Burkholderia mallei through genome reduction and large-scale rearrangements.</title>
        <authorList>
            <person name="Losada L."/>
            <person name="Ronning C.M."/>
            <person name="DeShazer D."/>
            <person name="Woods D."/>
            <person name="Fedorova N."/>
            <person name="Kim H.S."/>
            <person name="Shabalina S.A."/>
            <person name="Pearson T.R."/>
            <person name="Brinkac L."/>
            <person name="Tan P."/>
            <person name="Nandi T."/>
            <person name="Crabtree J."/>
            <person name="Badger J."/>
            <person name="Beckstrom-Sternberg S."/>
            <person name="Saqib M."/>
            <person name="Schutzer S.E."/>
            <person name="Keim P."/>
            <person name="Nierman W.C."/>
        </authorList>
    </citation>
    <scope>NUCLEOTIDE SEQUENCE [LARGE SCALE GENOMIC DNA]</scope>
    <source>
        <strain>NCTC 10247</strain>
    </source>
</reference>
<evidence type="ECO:0000255" key="1">
    <source>
        <dbReference type="HAMAP-Rule" id="MF_00006"/>
    </source>
</evidence>
<dbReference type="EC" id="4.3.2.1" evidence="1"/>
<dbReference type="EMBL" id="CP000548">
    <property type="protein sequence ID" value="ABO07282.1"/>
    <property type="molecule type" value="Genomic_DNA"/>
</dbReference>
<dbReference type="RefSeq" id="WP_004191886.1">
    <property type="nucleotide sequence ID" value="NZ_CP007802.1"/>
</dbReference>
<dbReference type="SMR" id="A3MLL6"/>
<dbReference type="GeneID" id="93059506"/>
<dbReference type="KEGG" id="bmaz:BM44_1565"/>
<dbReference type="KEGG" id="bmn:BMA10247_1608"/>
<dbReference type="PATRIC" id="fig|320389.8.peg.1748"/>
<dbReference type="UniPathway" id="UPA00068">
    <property type="reaction ID" value="UER00114"/>
</dbReference>
<dbReference type="GO" id="GO:0005829">
    <property type="term" value="C:cytosol"/>
    <property type="evidence" value="ECO:0007669"/>
    <property type="project" value="TreeGrafter"/>
</dbReference>
<dbReference type="GO" id="GO:0004056">
    <property type="term" value="F:argininosuccinate lyase activity"/>
    <property type="evidence" value="ECO:0007669"/>
    <property type="project" value="UniProtKB-UniRule"/>
</dbReference>
<dbReference type="GO" id="GO:0042450">
    <property type="term" value="P:arginine biosynthetic process via ornithine"/>
    <property type="evidence" value="ECO:0007669"/>
    <property type="project" value="InterPro"/>
</dbReference>
<dbReference type="GO" id="GO:0006526">
    <property type="term" value="P:L-arginine biosynthetic process"/>
    <property type="evidence" value="ECO:0007669"/>
    <property type="project" value="UniProtKB-UniRule"/>
</dbReference>
<dbReference type="CDD" id="cd01359">
    <property type="entry name" value="Argininosuccinate_lyase"/>
    <property type="match status" value="1"/>
</dbReference>
<dbReference type="FunFam" id="1.10.275.10:FF:000002">
    <property type="entry name" value="Argininosuccinate lyase"/>
    <property type="match status" value="1"/>
</dbReference>
<dbReference type="FunFam" id="1.10.40.30:FF:000001">
    <property type="entry name" value="Argininosuccinate lyase"/>
    <property type="match status" value="1"/>
</dbReference>
<dbReference type="FunFam" id="1.20.200.10:FF:000015">
    <property type="entry name" value="argininosuccinate lyase isoform X2"/>
    <property type="match status" value="1"/>
</dbReference>
<dbReference type="Gene3D" id="1.10.40.30">
    <property type="entry name" value="Fumarase/aspartase (C-terminal domain)"/>
    <property type="match status" value="1"/>
</dbReference>
<dbReference type="Gene3D" id="1.20.200.10">
    <property type="entry name" value="Fumarase/aspartase (Central domain)"/>
    <property type="match status" value="1"/>
</dbReference>
<dbReference type="Gene3D" id="1.10.275.10">
    <property type="entry name" value="Fumarase/aspartase (N-terminal domain)"/>
    <property type="match status" value="1"/>
</dbReference>
<dbReference type="HAMAP" id="MF_00006">
    <property type="entry name" value="Arg_succ_lyase"/>
    <property type="match status" value="1"/>
</dbReference>
<dbReference type="InterPro" id="IPR029419">
    <property type="entry name" value="Arg_succ_lyase_C"/>
</dbReference>
<dbReference type="InterPro" id="IPR009049">
    <property type="entry name" value="Argininosuccinate_lyase"/>
</dbReference>
<dbReference type="InterPro" id="IPR024083">
    <property type="entry name" value="Fumarase/histidase_N"/>
</dbReference>
<dbReference type="InterPro" id="IPR020557">
    <property type="entry name" value="Fumarate_lyase_CS"/>
</dbReference>
<dbReference type="InterPro" id="IPR000362">
    <property type="entry name" value="Fumarate_lyase_fam"/>
</dbReference>
<dbReference type="InterPro" id="IPR022761">
    <property type="entry name" value="Fumarate_lyase_N"/>
</dbReference>
<dbReference type="InterPro" id="IPR008948">
    <property type="entry name" value="L-Aspartase-like"/>
</dbReference>
<dbReference type="NCBIfam" id="TIGR00838">
    <property type="entry name" value="argH"/>
    <property type="match status" value="1"/>
</dbReference>
<dbReference type="PANTHER" id="PTHR43814">
    <property type="entry name" value="ARGININOSUCCINATE LYASE"/>
    <property type="match status" value="1"/>
</dbReference>
<dbReference type="PANTHER" id="PTHR43814:SF1">
    <property type="entry name" value="ARGININOSUCCINATE LYASE"/>
    <property type="match status" value="1"/>
</dbReference>
<dbReference type="Pfam" id="PF14698">
    <property type="entry name" value="ASL_C2"/>
    <property type="match status" value="1"/>
</dbReference>
<dbReference type="Pfam" id="PF00206">
    <property type="entry name" value="Lyase_1"/>
    <property type="match status" value="1"/>
</dbReference>
<dbReference type="PRINTS" id="PR00145">
    <property type="entry name" value="ARGSUCLYASE"/>
</dbReference>
<dbReference type="PRINTS" id="PR00149">
    <property type="entry name" value="FUMRATELYASE"/>
</dbReference>
<dbReference type="SUPFAM" id="SSF48557">
    <property type="entry name" value="L-aspartase-like"/>
    <property type="match status" value="1"/>
</dbReference>
<dbReference type="PROSITE" id="PS00163">
    <property type="entry name" value="FUMARATE_LYASES"/>
    <property type="match status" value="1"/>
</dbReference>
<accession>A3MLL6</accession>